<accession>C4XIK1</accession>
<proteinExistence type="inferred from homology"/>
<evidence type="ECO:0000255" key="1">
    <source>
        <dbReference type="HAMAP-Rule" id="MF_00693"/>
    </source>
</evidence>
<gene>
    <name type="ordered locus">DMR_30850</name>
</gene>
<organism>
    <name type="scientific">Solidesulfovibrio magneticus (strain ATCC 700980 / DSM 13731 / RS-1)</name>
    <name type="common">Desulfovibrio magneticus</name>
    <dbReference type="NCBI Taxonomy" id="573370"/>
    <lineage>
        <taxon>Bacteria</taxon>
        <taxon>Pseudomonadati</taxon>
        <taxon>Thermodesulfobacteriota</taxon>
        <taxon>Desulfovibrionia</taxon>
        <taxon>Desulfovibrionales</taxon>
        <taxon>Desulfovibrionaceae</taxon>
        <taxon>Solidesulfovibrio</taxon>
    </lineage>
</organism>
<dbReference type="EMBL" id="AP010904">
    <property type="protein sequence ID" value="BAH76576.1"/>
    <property type="molecule type" value="Genomic_DNA"/>
</dbReference>
<dbReference type="RefSeq" id="WP_015861735.1">
    <property type="nucleotide sequence ID" value="NC_012796.1"/>
</dbReference>
<dbReference type="SMR" id="C4XIK1"/>
<dbReference type="STRING" id="573370.DMR_30850"/>
<dbReference type="KEGG" id="dma:DMR_30850"/>
<dbReference type="eggNOG" id="COG0217">
    <property type="taxonomic scope" value="Bacteria"/>
</dbReference>
<dbReference type="HOGENOM" id="CLU_062974_2_2_7"/>
<dbReference type="OrthoDB" id="9781053at2"/>
<dbReference type="Proteomes" id="UP000009071">
    <property type="component" value="Chromosome"/>
</dbReference>
<dbReference type="GO" id="GO:0005829">
    <property type="term" value="C:cytosol"/>
    <property type="evidence" value="ECO:0007669"/>
    <property type="project" value="TreeGrafter"/>
</dbReference>
<dbReference type="GO" id="GO:0003677">
    <property type="term" value="F:DNA binding"/>
    <property type="evidence" value="ECO:0007669"/>
    <property type="project" value="UniProtKB-UniRule"/>
</dbReference>
<dbReference type="GO" id="GO:0006355">
    <property type="term" value="P:regulation of DNA-templated transcription"/>
    <property type="evidence" value="ECO:0007669"/>
    <property type="project" value="UniProtKB-UniRule"/>
</dbReference>
<dbReference type="FunFam" id="1.10.10.200:FF:000002">
    <property type="entry name" value="Probable transcriptional regulatory protein CLM62_37755"/>
    <property type="match status" value="1"/>
</dbReference>
<dbReference type="Gene3D" id="1.10.10.200">
    <property type="match status" value="1"/>
</dbReference>
<dbReference type="Gene3D" id="3.30.70.980">
    <property type="match status" value="2"/>
</dbReference>
<dbReference type="HAMAP" id="MF_00693">
    <property type="entry name" value="Transcrip_reg_TACO1"/>
    <property type="match status" value="1"/>
</dbReference>
<dbReference type="InterPro" id="IPR017856">
    <property type="entry name" value="Integrase-like_N"/>
</dbReference>
<dbReference type="InterPro" id="IPR048300">
    <property type="entry name" value="TACO1_YebC-like_2nd/3rd_dom"/>
</dbReference>
<dbReference type="InterPro" id="IPR049083">
    <property type="entry name" value="TACO1_YebC_N"/>
</dbReference>
<dbReference type="InterPro" id="IPR002876">
    <property type="entry name" value="Transcrip_reg_TACO1-like"/>
</dbReference>
<dbReference type="InterPro" id="IPR026564">
    <property type="entry name" value="Transcrip_reg_TACO1-like_dom3"/>
</dbReference>
<dbReference type="InterPro" id="IPR029072">
    <property type="entry name" value="YebC-like"/>
</dbReference>
<dbReference type="NCBIfam" id="NF001030">
    <property type="entry name" value="PRK00110.1"/>
    <property type="match status" value="1"/>
</dbReference>
<dbReference type="NCBIfam" id="NF009044">
    <property type="entry name" value="PRK12378.1"/>
    <property type="match status" value="1"/>
</dbReference>
<dbReference type="NCBIfam" id="TIGR01033">
    <property type="entry name" value="YebC/PmpR family DNA-binding transcriptional regulator"/>
    <property type="match status" value="1"/>
</dbReference>
<dbReference type="PANTHER" id="PTHR12532:SF6">
    <property type="entry name" value="TRANSCRIPTIONAL REGULATORY PROTEIN YEBC-RELATED"/>
    <property type="match status" value="1"/>
</dbReference>
<dbReference type="PANTHER" id="PTHR12532">
    <property type="entry name" value="TRANSLATIONAL ACTIVATOR OF CYTOCHROME C OXIDASE 1"/>
    <property type="match status" value="1"/>
</dbReference>
<dbReference type="Pfam" id="PF20772">
    <property type="entry name" value="TACO1_YebC_N"/>
    <property type="match status" value="1"/>
</dbReference>
<dbReference type="Pfam" id="PF01709">
    <property type="entry name" value="Transcrip_reg"/>
    <property type="match status" value="1"/>
</dbReference>
<dbReference type="SUPFAM" id="SSF75625">
    <property type="entry name" value="YebC-like"/>
    <property type="match status" value="1"/>
</dbReference>
<keyword id="KW-0963">Cytoplasm</keyword>
<keyword id="KW-0238">DNA-binding</keyword>
<keyword id="KW-0804">Transcription</keyword>
<keyword id="KW-0805">Transcription regulation</keyword>
<name>Y3085_SOLM1</name>
<protein>
    <recommendedName>
        <fullName evidence="1">Probable transcriptional regulatory protein DMR_30850</fullName>
    </recommendedName>
</protein>
<sequence>MAGHSKWHNIQARKSVQDAKKSKFFTKVTKELMLAARAGGADTALNQRLKSAIAAAKAVNLPKDKIDQAIKKGTGELAGENLEEVLYEGYGPGGVAILVEAATDNRNRTVAEVRHLLSKGGGAMGESGCVSWMFSQKGVFSFPKTFTEDQLMEVGLEHGAEEIMDEGEVWEVHCAPADFEPLRAAFEAAGMVSEDAEVAMVPANMVALDLEAGQKLLKLIDMLEDNEDVQKVHSNADLPDEMFG</sequence>
<reference key="1">
    <citation type="journal article" date="2009" name="Genome Res.">
        <title>Whole genome sequence of Desulfovibrio magneticus strain RS-1 revealed common gene clusters in magnetotactic bacteria.</title>
        <authorList>
            <person name="Nakazawa H."/>
            <person name="Arakaki A."/>
            <person name="Narita-Yamada S."/>
            <person name="Yashiro I."/>
            <person name="Jinno K."/>
            <person name="Aoki N."/>
            <person name="Tsuruyama A."/>
            <person name="Okamura Y."/>
            <person name="Tanikawa S."/>
            <person name="Fujita N."/>
            <person name="Takeyama H."/>
            <person name="Matsunaga T."/>
        </authorList>
    </citation>
    <scope>NUCLEOTIDE SEQUENCE [LARGE SCALE GENOMIC DNA]</scope>
    <source>
        <strain>ATCC 700980 / DSM 13731 / RS-1</strain>
    </source>
</reference>
<comment type="subcellular location">
    <subcellularLocation>
        <location evidence="1">Cytoplasm</location>
    </subcellularLocation>
</comment>
<comment type="similarity">
    <text evidence="1">Belongs to the TACO1 family.</text>
</comment>
<feature type="chain" id="PRO_1000212605" description="Probable transcriptional regulatory protein DMR_30850">
    <location>
        <begin position="1"/>
        <end position="244"/>
    </location>
</feature>